<comment type="function">
    <text evidence="1">Probably involved in ribonucleotide reductase function.</text>
</comment>
<comment type="similarity">
    <text evidence="1">Belongs to the NrdI family.</text>
</comment>
<name>NRDI_ECO24</name>
<accession>A7ZQA5</accession>
<organism>
    <name type="scientific">Escherichia coli O139:H28 (strain E24377A / ETEC)</name>
    <dbReference type="NCBI Taxonomy" id="331111"/>
    <lineage>
        <taxon>Bacteria</taxon>
        <taxon>Pseudomonadati</taxon>
        <taxon>Pseudomonadota</taxon>
        <taxon>Gammaproteobacteria</taxon>
        <taxon>Enterobacterales</taxon>
        <taxon>Enterobacteriaceae</taxon>
        <taxon>Escherichia</taxon>
    </lineage>
</organism>
<proteinExistence type="inferred from homology"/>
<dbReference type="EMBL" id="CP000800">
    <property type="protein sequence ID" value="ABV20191.1"/>
    <property type="molecule type" value="Genomic_DNA"/>
</dbReference>
<dbReference type="RefSeq" id="WP_000080944.1">
    <property type="nucleotide sequence ID" value="NC_009801.1"/>
</dbReference>
<dbReference type="SMR" id="A7ZQA5"/>
<dbReference type="GeneID" id="75205917"/>
<dbReference type="KEGG" id="ecw:EcE24377A_2955"/>
<dbReference type="HOGENOM" id="CLU_114845_0_0_6"/>
<dbReference type="Proteomes" id="UP000001122">
    <property type="component" value="Chromosome"/>
</dbReference>
<dbReference type="GO" id="GO:0010181">
    <property type="term" value="F:FMN binding"/>
    <property type="evidence" value="ECO:0007669"/>
    <property type="project" value="InterPro"/>
</dbReference>
<dbReference type="GO" id="GO:0036211">
    <property type="term" value="P:protein modification process"/>
    <property type="evidence" value="ECO:0007669"/>
    <property type="project" value="InterPro"/>
</dbReference>
<dbReference type="FunFam" id="3.40.50.360:FF:000005">
    <property type="entry name" value="Protein NrdI"/>
    <property type="match status" value="1"/>
</dbReference>
<dbReference type="Gene3D" id="3.40.50.360">
    <property type="match status" value="1"/>
</dbReference>
<dbReference type="HAMAP" id="MF_00128">
    <property type="entry name" value="NrdI"/>
    <property type="match status" value="1"/>
</dbReference>
<dbReference type="InterPro" id="IPR029039">
    <property type="entry name" value="Flavoprotein-like_sf"/>
</dbReference>
<dbReference type="InterPro" id="IPR020852">
    <property type="entry name" value="RNR_Ib_NrdI_bac"/>
</dbReference>
<dbReference type="InterPro" id="IPR004465">
    <property type="entry name" value="RNR_NrdI"/>
</dbReference>
<dbReference type="NCBIfam" id="TIGR00333">
    <property type="entry name" value="nrdI"/>
    <property type="match status" value="1"/>
</dbReference>
<dbReference type="PANTHER" id="PTHR37297">
    <property type="entry name" value="PROTEIN NRDI"/>
    <property type="match status" value="1"/>
</dbReference>
<dbReference type="PANTHER" id="PTHR37297:SF1">
    <property type="entry name" value="PROTEIN NRDI"/>
    <property type="match status" value="1"/>
</dbReference>
<dbReference type="Pfam" id="PF07972">
    <property type="entry name" value="Flavodoxin_NdrI"/>
    <property type="match status" value="1"/>
</dbReference>
<dbReference type="PIRSF" id="PIRSF005087">
    <property type="entry name" value="NrdI"/>
    <property type="match status" value="1"/>
</dbReference>
<dbReference type="SUPFAM" id="SSF52218">
    <property type="entry name" value="Flavoproteins"/>
    <property type="match status" value="1"/>
</dbReference>
<keyword id="KW-1185">Reference proteome</keyword>
<feature type="chain" id="PRO_1000057834" description="Protein NrdI">
    <location>
        <begin position="1"/>
        <end position="136"/>
    </location>
</feature>
<evidence type="ECO:0000255" key="1">
    <source>
        <dbReference type="HAMAP-Rule" id="MF_00128"/>
    </source>
</evidence>
<gene>
    <name evidence="1" type="primary">nrdI</name>
    <name type="ordered locus">EcE24377A_2955</name>
</gene>
<sequence length="136" mass="15312">MSQLVYFSSSSENTQRFIERLGLPAVRIPLNERERIQVDEPYILIVPSYGGGGTAGAVPRQVIRFLNDEHNRALLRGVIASGNRNFGEAYGRAGDVIAQKCGVPWLYRFELMGTQSDIENVRKGVTEFWQRQPQNA</sequence>
<reference key="1">
    <citation type="journal article" date="2008" name="J. Bacteriol.">
        <title>The pangenome structure of Escherichia coli: comparative genomic analysis of E. coli commensal and pathogenic isolates.</title>
        <authorList>
            <person name="Rasko D.A."/>
            <person name="Rosovitz M.J."/>
            <person name="Myers G.S.A."/>
            <person name="Mongodin E.F."/>
            <person name="Fricke W.F."/>
            <person name="Gajer P."/>
            <person name="Crabtree J."/>
            <person name="Sebaihia M."/>
            <person name="Thomson N.R."/>
            <person name="Chaudhuri R."/>
            <person name="Henderson I.R."/>
            <person name="Sperandio V."/>
            <person name="Ravel J."/>
        </authorList>
    </citation>
    <scope>NUCLEOTIDE SEQUENCE [LARGE SCALE GENOMIC DNA]</scope>
    <source>
        <strain>E24377A / ETEC</strain>
    </source>
</reference>
<protein>
    <recommendedName>
        <fullName evidence="1">Protein NrdI</fullName>
    </recommendedName>
</protein>